<accession>A0LIJ9</accession>
<dbReference type="EMBL" id="CP000478">
    <property type="protein sequence ID" value="ABK17251.1"/>
    <property type="molecule type" value="Genomic_DNA"/>
</dbReference>
<dbReference type="RefSeq" id="WP_011698421.1">
    <property type="nucleotide sequence ID" value="NC_008554.1"/>
</dbReference>
<dbReference type="SMR" id="A0LIJ9"/>
<dbReference type="FunCoup" id="A0LIJ9">
    <property type="interactions" value="421"/>
</dbReference>
<dbReference type="STRING" id="335543.Sfum_1564"/>
<dbReference type="KEGG" id="sfu:Sfum_1564"/>
<dbReference type="eggNOG" id="COG0186">
    <property type="taxonomic scope" value="Bacteria"/>
</dbReference>
<dbReference type="HOGENOM" id="CLU_073626_1_2_7"/>
<dbReference type="InParanoid" id="A0LIJ9"/>
<dbReference type="OrthoDB" id="9811714at2"/>
<dbReference type="Proteomes" id="UP000001784">
    <property type="component" value="Chromosome"/>
</dbReference>
<dbReference type="GO" id="GO:0022627">
    <property type="term" value="C:cytosolic small ribosomal subunit"/>
    <property type="evidence" value="ECO:0007669"/>
    <property type="project" value="TreeGrafter"/>
</dbReference>
<dbReference type="GO" id="GO:0019843">
    <property type="term" value="F:rRNA binding"/>
    <property type="evidence" value="ECO:0007669"/>
    <property type="project" value="UniProtKB-UniRule"/>
</dbReference>
<dbReference type="GO" id="GO:0003735">
    <property type="term" value="F:structural constituent of ribosome"/>
    <property type="evidence" value="ECO:0007669"/>
    <property type="project" value="InterPro"/>
</dbReference>
<dbReference type="GO" id="GO:0006412">
    <property type="term" value="P:translation"/>
    <property type="evidence" value="ECO:0007669"/>
    <property type="project" value="UniProtKB-UniRule"/>
</dbReference>
<dbReference type="CDD" id="cd00364">
    <property type="entry name" value="Ribosomal_uS17"/>
    <property type="match status" value="1"/>
</dbReference>
<dbReference type="Gene3D" id="2.40.50.140">
    <property type="entry name" value="Nucleic acid-binding proteins"/>
    <property type="match status" value="1"/>
</dbReference>
<dbReference type="HAMAP" id="MF_01345_B">
    <property type="entry name" value="Ribosomal_uS17_B"/>
    <property type="match status" value="1"/>
</dbReference>
<dbReference type="InterPro" id="IPR012340">
    <property type="entry name" value="NA-bd_OB-fold"/>
</dbReference>
<dbReference type="InterPro" id="IPR000266">
    <property type="entry name" value="Ribosomal_uS17"/>
</dbReference>
<dbReference type="InterPro" id="IPR019984">
    <property type="entry name" value="Ribosomal_uS17_bact/chlr"/>
</dbReference>
<dbReference type="InterPro" id="IPR019979">
    <property type="entry name" value="Ribosomal_uS17_CS"/>
</dbReference>
<dbReference type="NCBIfam" id="NF004123">
    <property type="entry name" value="PRK05610.1"/>
    <property type="match status" value="1"/>
</dbReference>
<dbReference type="NCBIfam" id="TIGR03635">
    <property type="entry name" value="uS17_bact"/>
    <property type="match status" value="1"/>
</dbReference>
<dbReference type="PANTHER" id="PTHR10744">
    <property type="entry name" value="40S RIBOSOMAL PROTEIN S11 FAMILY MEMBER"/>
    <property type="match status" value="1"/>
</dbReference>
<dbReference type="PANTHER" id="PTHR10744:SF1">
    <property type="entry name" value="SMALL RIBOSOMAL SUBUNIT PROTEIN US17M"/>
    <property type="match status" value="1"/>
</dbReference>
<dbReference type="Pfam" id="PF00366">
    <property type="entry name" value="Ribosomal_S17"/>
    <property type="match status" value="1"/>
</dbReference>
<dbReference type="PRINTS" id="PR00973">
    <property type="entry name" value="RIBOSOMALS17"/>
</dbReference>
<dbReference type="SUPFAM" id="SSF50249">
    <property type="entry name" value="Nucleic acid-binding proteins"/>
    <property type="match status" value="1"/>
</dbReference>
<dbReference type="PROSITE" id="PS00056">
    <property type="entry name" value="RIBOSOMAL_S17"/>
    <property type="match status" value="1"/>
</dbReference>
<feature type="chain" id="PRO_1000055036" description="Small ribosomal subunit protein uS17">
    <location>
        <begin position="1"/>
        <end position="87"/>
    </location>
</feature>
<gene>
    <name evidence="1" type="primary">rpsQ</name>
    <name type="ordered locus">Sfum_1564</name>
</gene>
<keyword id="KW-1185">Reference proteome</keyword>
<keyword id="KW-0687">Ribonucleoprotein</keyword>
<keyword id="KW-0689">Ribosomal protein</keyword>
<keyword id="KW-0694">RNA-binding</keyword>
<keyword id="KW-0699">rRNA-binding</keyword>
<sequence length="87" mass="10230">MEEQKSGRKTRVGRVLSNKMDKTVVVVVERLIHHPQYHKFIRRQNKFKAHDAQNACRVGDRVIIEESRPISKDKRWVVVQVLDKAVI</sequence>
<protein>
    <recommendedName>
        <fullName evidence="1">Small ribosomal subunit protein uS17</fullName>
    </recommendedName>
    <alternativeName>
        <fullName evidence="2">30S ribosomal protein S17</fullName>
    </alternativeName>
</protein>
<name>RS17_SYNFM</name>
<proteinExistence type="inferred from homology"/>
<evidence type="ECO:0000255" key="1">
    <source>
        <dbReference type="HAMAP-Rule" id="MF_01345"/>
    </source>
</evidence>
<evidence type="ECO:0000305" key="2"/>
<comment type="function">
    <text evidence="1">One of the primary rRNA binding proteins, it binds specifically to the 5'-end of 16S ribosomal RNA.</text>
</comment>
<comment type="subunit">
    <text evidence="1">Part of the 30S ribosomal subunit.</text>
</comment>
<comment type="similarity">
    <text evidence="1">Belongs to the universal ribosomal protein uS17 family.</text>
</comment>
<reference key="1">
    <citation type="submission" date="2006-10" db="EMBL/GenBank/DDBJ databases">
        <title>Complete sequence of Syntrophobacter fumaroxidans MPOB.</title>
        <authorList>
            <consortium name="US DOE Joint Genome Institute"/>
            <person name="Copeland A."/>
            <person name="Lucas S."/>
            <person name="Lapidus A."/>
            <person name="Barry K."/>
            <person name="Detter J.C."/>
            <person name="Glavina del Rio T."/>
            <person name="Hammon N."/>
            <person name="Israni S."/>
            <person name="Pitluck S."/>
            <person name="Goltsman E.G."/>
            <person name="Martinez M."/>
            <person name="Schmutz J."/>
            <person name="Larimer F."/>
            <person name="Land M."/>
            <person name="Hauser L."/>
            <person name="Kyrpides N."/>
            <person name="Kim E."/>
            <person name="Boone D.R."/>
            <person name="Brockman F."/>
            <person name="Culley D."/>
            <person name="Ferry J."/>
            <person name="Gunsalus R."/>
            <person name="McInerney M.J."/>
            <person name="Morrison M."/>
            <person name="Plugge C."/>
            <person name="Rohlin L."/>
            <person name="Scholten J."/>
            <person name="Sieber J."/>
            <person name="Stams A.J.M."/>
            <person name="Worm P."/>
            <person name="Henstra A.M."/>
            <person name="Richardson P."/>
        </authorList>
    </citation>
    <scope>NUCLEOTIDE SEQUENCE [LARGE SCALE GENOMIC DNA]</scope>
    <source>
        <strain>DSM 10017 / MPOB</strain>
    </source>
</reference>
<organism>
    <name type="scientific">Syntrophobacter fumaroxidans (strain DSM 10017 / MPOB)</name>
    <dbReference type="NCBI Taxonomy" id="335543"/>
    <lineage>
        <taxon>Bacteria</taxon>
        <taxon>Pseudomonadati</taxon>
        <taxon>Thermodesulfobacteriota</taxon>
        <taxon>Syntrophobacteria</taxon>
        <taxon>Syntrophobacterales</taxon>
        <taxon>Syntrophobacteraceae</taxon>
        <taxon>Syntrophobacter</taxon>
    </lineage>
</organism>